<protein>
    <recommendedName>
        <fullName evidence="9">Diphosphoinositol polyphosphate phosphohydrolase 3-beta</fullName>
        <shortName>DIPP-3-beta</shortName>
        <shortName>DIPP3-beta</shortName>
        <shortName>hDIPP3beta</shortName>
        <ecNumber evidence="5 6 7">3.6.1.52</ecNumber>
    </recommendedName>
    <alternativeName>
        <fullName>Diadenosine 5',5'''-P1,P6-hexaphosphate hydrolase 3-beta</fullName>
    </alternativeName>
    <alternativeName>
        <fullName>Diadenosine hexaphosphate hydrolase (AMP-forming)</fullName>
        <ecNumber evidence="5 6 7">3.6.1.60</ecNumber>
    </alternativeName>
    <alternativeName>
        <fullName>Nucleoside diphosphate-linked moiety X motif 11</fullName>
        <shortName>Nudix motif 11</shortName>
    </alternativeName>
    <alternativeName>
        <fullName>hAps1</fullName>
    </alternativeName>
</protein>
<evidence type="ECO:0000250" key="1"/>
<evidence type="ECO:0000250" key="2">
    <source>
        <dbReference type="UniProtKB" id="O95989"/>
    </source>
</evidence>
<evidence type="ECO:0000255" key="3">
    <source>
        <dbReference type="PROSITE-ProRule" id="PRU00794"/>
    </source>
</evidence>
<evidence type="ECO:0000256" key="4">
    <source>
        <dbReference type="SAM" id="MobiDB-lite"/>
    </source>
</evidence>
<evidence type="ECO:0000269" key="5">
    <source>
    </source>
</evidence>
<evidence type="ECO:0000269" key="6">
    <source>
    </source>
</evidence>
<evidence type="ECO:0000269" key="7">
    <source>
    </source>
</evidence>
<evidence type="ECO:0000269" key="8">
    <source>
    </source>
</evidence>
<evidence type="ECO:0000305" key="9"/>
<evidence type="ECO:0000312" key="10">
    <source>
        <dbReference type="HGNC" id="HGNC:18011"/>
    </source>
</evidence>
<sequence>MKCKPNQTRTYDPEGFKKRAACLCFRSEREDEVLLVSSSRYPDRWIVPGGGMEPEEEPGGAAVREVYEEAGVKGKLGRLLGVFEQNQDRKHRTYVYVLTVTELLEDWEDSVSIGRKREWFKVEDAIKVLQCHKPVHAEYLEKLKLGGSPTNGNSMAPSSPDSDP</sequence>
<proteinExistence type="evidence at protein level"/>
<gene>
    <name evidence="10" type="primary">NUDT11</name>
    <name type="synonym">APS1</name>
    <name type="synonym">DIPP3B</name>
</gene>
<organism>
    <name type="scientific">Homo sapiens</name>
    <name type="common">Human</name>
    <dbReference type="NCBI Taxonomy" id="9606"/>
    <lineage>
        <taxon>Eukaryota</taxon>
        <taxon>Metazoa</taxon>
        <taxon>Chordata</taxon>
        <taxon>Craniata</taxon>
        <taxon>Vertebrata</taxon>
        <taxon>Euteleostomi</taxon>
        <taxon>Mammalia</taxon>
        <taxon>Eutheria</taxon>
        <taxon>Euarchontoglires</taxon>
        <taxon>Primates</taxon>
        <taxon>Haplorrhini</taxon>
        <taxon>Catarrhini</taxon>
        <taxon>Hominidae</taxon>
        <taxon>Homo</taxon>
    </lineage>
</organism>
<comment type="function">
    <text evidence="5">Cleaves a beta-phosphate from the diphosphate groups in PP-InsP5 (diphosphoinositol pentakisphosphate), suggesting that it may play a role in signal transduction. Also able to catalyze the hydrolysis of dinucleoside oligophosphates, with Ap6A and Ap5A being the preferred substrates. The major reaction products are ADP and p4a from Ap6A and ADP and ATP from Ap5A. Also able to hydrolyze 5-phosphoribose 1-diphosphate.</text>
</comment>
<comment type="catalytic activity">
    <reaction evidence="5 6 7">
        <text>diphospho-myo-inositol polyphosphate + H2O = myo-inositol polyphosphate + phosphate.</text>
        <dbReference type="EC" id="3.6.1.52"/>
    </reaction>
</comment>
<comment type="catalytic activity">
    <reaction evidence="5 6 7">
        <text>P(1),P(6)-bis(5'-adenosyl) hexaphosphate + H2O = adenosine 5'-pentaphosphate + AMP + 2 H(+)</text>
        <dbReference type="Rhea" id="RHEA:32047"/>
        <dbReference type="ChEBI" id="CHEBI:15377"/>
        <dbReference type="ChEBI" id="CHEBI:15378"/>
        <dbReference type="ChEBI" id="CHEBI:63740"/>
        <dbReference type="ChEBI" id="CHEBI:63813"/>
        <dbReference type="ChEBI" id="CHEBI:456215"/>
        <dbReference type="EC" id="3.6.1.60"/>
    </reaction>
</comment>
<comment type="catalytic activity">
    <reaction evidence="5 6 7">
        <text>P(1),P(5)-bis(5'-adenosyl) pentaphosphate + H2O = adenosine 5'-tetraphosphate + AMP + 2 H(+)</text>
        <dbReference type="Rhea" id="RHEA:32051"/>
        <dbReference type="ChEBI" id="CHEBI:15377"/>
        <dbReference type="ChEBI" id="CHEBI:15378"/>
        <dbReference type="ChEBI" id="CHEBI:58450"/>
        <dbReference type="ChEBI" id="CHEBI:62041"/>
        <dbReference type="ChEBI" id="CHEBI:456215"/>
        <dbReference type="EC" id="3.6.1.60"/>
    </reaction>
</comment>
<comment type="cofactor">
    <cofactor evidence="1 6">
        <name>Mg(2+)</name>
        <dbReference type="ChEBI" id="CHEBI:18420"/>
    </cofactor>
    <cofactor evidence="1 6">
        <name>Mn(2+)</name>
        <dbReference type="ChEBI" id="CHEBI:29035"/>
    </cofactor>
    <text evidence="1 6">Binds 3 Mg(2+) or Mn(2+) ions per subunit. Mn(2+) may be the true cofactor in vivo.</text>
</comment>
<comment type="biophysicochemical properties">
    <kinetics>
        <KM evidence="5 6">0.053 uM for PP-InsP5</KM>
        <KM evidence="5 6">13 uM for Ap6A</KM>
        <KM evidence="5 6">37 uM for Ap5A</KM>
    </kinetics>
    <phDependence>
        <text evidence="5 6">Optimum pH is 8.5.</text>
    </phDependence>
</comment>
<comment type="interaction">
    <interactant intactId="EBI-1043825">
        <id>Q96G61</id>
    </interactant>
    <interactant intactId="EBI-742054">
        <id>Q96D03</id>
        <label>DDIT4L</label>
    </interactant>
    <organismsDiffer>false</organismsDiffer>
    <experiments>3</experiments>
</comment>
<comment type="subcellular location">
    <subcellularLocation>
        <location evidence="6">Cytoplasm</location>
    </subcellularLocation>
</comment>
<comment type="tissue specificity">
    <text evidence="5 6">Mainly expressed in testis and, at lower level in brain. According to PubMed:12121577, it is also expressed in pancreas and weakly expressed in thymus, prostate, ovary, lung, small intestine and heart.</text>
</comment>
<comment type="similarity">
    <text evidence="9">Belongs to the Nudix hydrolase family. DIPP subfamily.</text>
</comment>
<name>NUD11_HUMAN</name>
<keyword id="KW-0963">Cytoplasm</keyword>
<keyword id="KW-0378">Hydrolase</keyword>
<keyword id="KW-0460">Magnesium</keyword>
<keyword id="KW-0464">Manganese</keyword>
<keyword id="KW-0479">Metal-binding</keyword>
<keyword id="KW-1185">Reference proteome</keyword>
<dbReference type="EC" id="3.6.1.52" evidence="5 6 7"/>
<dbReference type="EC" id="3.6.1.60" evidence="5 6 7"/>
<dbReference type="EMBL" id="AK001490">
    <property type="protein sequence ID" value="BAA91720.1"/>
    <property type="molecule type" value="mRNA"/>
</dbReference>
<dbReference type="EMBL" id="AL158055">
    <property type="status" value="NOT_ANNOTATED_CDS"/>
    <property type="molecule type" value="Genomic_DNA"/>
</dbReference>
<dbReference type="EMBL" id="BC009942">
    <property type="protein sequence ID" value="AAH09942.1"/>
    <property type="molecule type" value="mRNA"/>
</dbReference>
<dbReference type="CCDS" id="CCDS43952.1"/>
<dbReference type="RefSeq" id="NP_060629.2">
    <property type="nucleotide sequence ID" value="NM_018159.3"/>
</dbReference>
<dbReference type="SMR" id="Q96G61"/>
<dbReference type="BioGRID" id="120487">
    <property type="interactions" value="7"/>
</dbReference>
<dbReference type="FunCoup" id="Q96G61">
    <property type="interactions" value="1939"/>
</dbReference>
<dbReference type="IntAct" id="Q96G61">
    <property type="interactions" value="4"/>
</dbReference>
<dbReference type="STRING" id="9606.ENSP00000365160"/>
<dbReference type="ChEMBL" id="CHEMBL4296042"/>
<dbReference type="GlyGen" id="Q96G61">
    <property type="glycosylation" value="1 site, 1 O-linked glycan (1 site)"/>
</dbReference>
<dbReference type="iPTMnet" id="Q96G61"/>
<dbReference type="PhosphoSitePlus" id="Q96G61"/>
<dbReference type="BioMuta" id="NUDT11"/>
<dbReference type="DMDM" id="68565927"/>
<dbReference type="jPOST" id="Q96G61"/>
<dbReference type="MassIVE" id="Q96G61"/>
<dbReference type="PaxDb" id="9606-ENSP00000365160"/>
<dbReference type="PeptideAtlas" id="Q96G61"/>
<dbReference type="ProteomicsDB" id="76597"/>
<dbReference type="Pumba" id="Q96G61"/>
<dbReference type="Antibodypedia" id="43413">
    <property type="antibodies" value="40 antibodies from 12 providers"/>
</dbReference>
<dbReference type="DNASU" id="55190"/>
<dbReference type="Ensembl" id="ENST00000375992.4">
    <property type="protein sequence ID" value="ENSP00000365160.3"/>
    <property type="gene ID" value="ENSG00000196368.5"/>
</dbReference>
<dbReference type="GeneID" id="55190"/>
<dbReference type="KEGG" id="hsa:55190"/>
<dbReference type="MANE-Select" id="ENST00000375992.4">
    <property type="protein sequence ID" value="ENSP00000365160.3"/>
    <property type="RefSeq nucleotide sequence ID" value="NM_018159.4"/>
    <property type="RefSeq protein sequence ID" value="NP_060629.2"/>
</dbReference>
<dbReference type="UCSC" id="uc010njt.4">
    <property type="organism name" value="human"/>
</dbReference>
<dbReference type="AGR" id="HGNC:18011"/>
<dbReference type="CTD" id="55190"/>
<dbReference type="DisGeNET" id="55190"/>
<dbReference type="GeneCards" id="NUDT11"/>
<dbReference type="HGNC" id="HGNC:18011">
    <property type="gene designation" value="NUDT11"/>
</dbReference>
<dbReference type="HPA" id="ENSG00000196368">
    <property type="expression patterns" value="Tissue enhanced (brain, testis)"/>
</dbReference>
<dbReference type="MIM" id="300528">
    <property type="type" value="gene"/>
</dbReference>
<dbReference type="neXtProt" id="NX_Q96G61"/>
<dbReference type="OpenTargets" id="ENSG00000196368"/>
<dbReference type="PharmGKB" id="PA31832"/>
<dbReference type="VEuPathDB" id="HostDB:ENSG00000196368"/>
<dbReference type="eggNOG" id="KOG2839">
    <property type="taxonomic scope" value="Eukaryota"/>
</dbReference>
<dbReference type="GeneTree" id="ENSGT00940000160559"/>
<dbReference type="HOGENOM" id="CLU_037162_1_0_1"/>
<dbReference type="InParanoid" id="Q96G61"/>
<dbReference type="OMA" id="PDEMQLN"/>
<dbReference type="OrthoDB" id="2011998at2759"/>
<dbReference type="PAN-GO" id="Q96G61">
    <property type="GO annotations" value="11 GO annotations based on evolutionary models"/>
</dbReference>
<dbReference type="PhylomeDB" id="Q96G61"/>
<dbReference type="TreeFam" id="TF106349"/>
<dbReference type="BioCyc" id="MetaCyc:HS05381-MONOMER"/>
<dbReference type="BRENDA" id="3.6.1.52">
    <property type="organism ID" value="2681"/>
</dbReference>
<dbReference type="BRENDA" id="3.6.1.60">
    <property type="organism ID" value="2681"/>
</dbReference>
<dbReference type="PathwayCommons" id="Q96G61"/>
<dbReference type="Reactome" id="R-HSA-1855167">
    <property type="pathway name" value="Synthesis of pyrophosphates in the cytosol"/>
</dbReference>
<dbReference type="SignaLink" id="Q96G61"/>
<dbReference type="BioGRID-ORCS" id="55190">
    <property type="hits" value="18 hits in 665 CRISPR screens"/>
</dbReference>
<dbReference type="GeneWiki" id="NUDT11"/>
<dbReference type="GenomeRNAi" id="55190"/>
<dbReference type="Pharos" id="Q96G61">
    <property type="development level" value="Tbio"/>
</dbReference>
<dbReference type="PRO" id="PR:Q96G61"/>
<dbReference type="Proteomes" id="UP000005640">
    <property type="component" value="Chromosome X"/>
</dbReference>
<dbReference type="RNAct" id="Q96G61">
    <property type="molecule type" value="protein"/>
</dbReference>
<dbReference type="Bgee" id="ENSG00000196368">
    <property type="expression patterns" value="Expressed in cortical plate and 162 other cell types or tissues"/>
</dbReference>
<dbReference type="GO" id="GO:0005737">
    <property type="term" value="C:cytoplasm"/>
    <property type="evidence" value="ECO:0000318"/>
    <property type="project" value="GO_Central"/>
</dbReference>
<dbReference type="GO" id="GO:0005829">
    <property type="term" value="C:cytosol"/>
    <property type="evidence" value="ECO:0000314"/>
    <property type="project" value="HPA"/>
</dbReference>
<dbReference type="GO" id="GO:0005634">
    <property type="term" value="C:nucleus"/>
    <property type="evidence" value="ECO:0000318"/>
    <property type="project" value="GO_Central"/>
</dbReference>
<dbReference type="GO" id="GO:0034431">
    <property type="term" value="F:bis(5'-adenosyl)-hexaphosphatase activity"/>
    <property type="evidence" value="ECO:0000318"/>
    <property type="project" value="GO_Central"/>
</dbReference>
<dbReference type="GO" id="GO:0034432">
    <property type="term" value="F:bis(5'-adenosyl)-pentaphosphatase activity"/>
    <property type="evidence" value="ECO:0000318"/>
    <property type="project" value="GO_Central"/>
</dbReference>
<dbReference type="GO" id="GO:0008486">
    <property type="term" value="F:diphosphoinositol-polyphosphate diphosphatase activity"/>
    <property type="evidence" value="ECO:0000250"/>
    <property type="project" value="UniProtKB"/>
</dbReference>
<dbReference type="GO" id="GO:0000298">
    <property type="term" value="F:endopolyphosphatase activity"/>
    <property type="evidence" value="ECO:0000318"/>
    <property type="project" value="GO_Central"/>
</dbReference>
<dbReference type="GO" id="GO:0046872">
    <property type="term" value="F:metal ion binding"/>
    <property type="evidence" value="ECO:0007669"/>
    <property type="project" value="UniProtKB-KW"/>
</dbReference>
<dbReference type="GO" id="GO:1901911">
    <property type="term" value="P:adenosine 5'-(hexahydrogen pentaphosphate) catabolic process"/>
    <property type="evidence" value="ECO:0000318"/>
    <property type="project" value="GO_Central"/>
</dbReference>
<dbReference type="GO" id="GO:1901909">
    <property type="term" value="P:diadenosine hexaphosphate catabolic process"/>
    <property type="evidence" value="ECO:0000318"/>
    <property type="project" value="GO_Central"/>
</dbReference>
<dbReference type="GO" id="GO:1901907">
    <property type="term" value="P:diadenosine pentaphosphate catabolic process"/>
    <property type="evidence" value="ECO:0000318"/>
    <property type="project" value="GO_Central"/>
</dbReference>
<dbReference type="GO" id="GO:0071543">
    <property type="term" value="P:diphosphoinositol polyphosphate metabolic process"/>
    <property type="evidence" value="ECO:0000318"/>
    <property type="project" value="GO_Central"/>
</dbReference>
<dbReference type="CDD" id="cd04666">
    <property type="entry name" value="NUDIX_DIPP2_like_Nudt4"/>
    <property type="match status" value="1"/>
</dbReference>
<dbReference type="FunFam" id="3.90.79.10:FF:000002">
    <property type="entry name" value="diphosphoinositol polyphosphate phosphohydrolase 1"/>
    <property type="match status" value="1"/>
</dbReference>
<dbReference type="Gene3D" id="3.90.79.10">
    <property type="entry name" value="Nucleoside Triphosphate Pyrophosphohydrolase"/>
    <property type="match status" value="1"/>
</dbReference>
<dbReference type="InterPro" id="IPR047198">
    <property type="entry name" value="DDP-like_NUDIX"/>
</dbReference>
<dbReference type="InterPro" id="IPR015797">
    <property type="entry name" value="NUDIX_hydrolase-like_dom_sf"/>
</dbReference>
<dbReference type="InterPro" id="IPR020084">
    <property type="entry name" value="NUDIX_hydrolase_CS"/>
</dbReference>
<dbReference type="InterPro" id="IPR000086">
    <property type="entry name" value="NUDIX_hydrolase_dom"/>
</dbReference>
<dbReference type="PANTHER" id="PTHR12629">
    <property type="entry name" value="DIPHOSPHOINOSITOL POLYPHOSPHATE PHOSPHOHYDROLASE"/>
    <property type="match status" value="1"/>
</dbReference>
<dbReference type="PANTHER" id="PTHR12629:SF35">
    <property type="entry name" value="DIPHOSPHOINOSITOL POLYPHOSPHATE PHOSPHOHYDROLASE 3-BETA"/>
    <property type="match status" value="1"/>
</dbReference>
<dbReference type="Pfam" id="PF00293">
    <property type="entry name" value="NUDIX"/>
    <property type="match status" value="1"/>
</dbReference>
<dbReference type="SUPFAM" id="SSF55811">
    <property type="entry name" value="Nudix"/>
    <property type="match status" value="1"/>
</dbReference>
<dbReference type="PROSITE" id="PS51462">
    <property type="entry name" value="NUDIX"/>
    <property type="match status" value="1"/>
</dbReference>
<dbReference type="PROSITE" id="PS00893">
    <property type="entry name" value="NUDIX_BOX"/>
    <property type="match status" value="1"/>
</dbReference>
<accession>Q96G61</accession>
<accession>Q9NVN0</accession>
<reference key="1">
    <citation type="journal article" date="2002" name="J. Biol. Chem.">
        <title>An adjacent pair of human NUDT genes on chromosome X are preferentially expressed in testis and encode two new isoforms of diphosphoinositol polyphosphate phosphohydrolase.</title>
        <authorList>
            <person name="Hidaka K."/>
            <person name="Caffrey J.J."/>
            <person name="Hua L."/>
            <person name="Zhang T."/>
            <person name="Falck J.R."/>
            <person name="Nickel G.C."/>
            <person name="Carrel L."/>
            <person name="Barnes L.D."/>
            <person name="Shears S.B."/>
        </authorList>
    </citation>
    <scope>NUCLEOTIDE SEQUENCE [MRNA]</scope>
    <scope>FUNCTION</scope>
    <scope>CATALYTIC ACTIVITY</scope>
    <scope>BIOPHYSICOCHEMICAL PROPERTIES</scope>
    <scope>TISSUE SPECIFICITY</scope>
</reference>
<reference key="2">
    <citation type="journal article" date="2004" name="Nat. Genet.">
        <title>Complete sequencing and characterization of 21,243 full-length human cDNAs.</title>
        <authorList>
            <person name="Ota T."/>
            <person name="Suzuki Y."/>
            <person name="Nishikawa T."/>
            <person name="Otsuki T."/>
            <person name="Sugiyama T."/>
            <person name="Irie R."/>
            <person name="Wakamatsu A."/>
            <person name="Hayashi K."/>
            <person name="Sato H."/>
            <person name="Nagai K."/>
            <person name="Kimura K."/>
            <person name="Makita H."/>
            <person name="Sekine M."/>
            <person name="Obayashi M."/>
            <person name="Nishi T."/>
            <person name="Shibahara T."/>
            <person name="Tanaka T."/>
            <person name="Ishii S."/>
            <person name="Yamamoto J."/>
            <person name="Saito K."/>
            <person name="Kawai Y."/>
            <person name="Isono Y."/>
            <person name="Nakamura Y."/>
            <person name="Nagahari K."/>
            <person name="Murakami K."/>
            <person name="Yasuda T."/>
            <person name="Iwayanagi T."/>
            <person name="Wagatsuma M."/>
            <person name="Shiratori A."/>
            <person name="Sudo H."/>
            <person name="Hosoiri T."/>
            <person name="Kaku Y."/>
            <person name="Kodaira H."/>
            <person name="Kondo H."/>
            <person name="Sugawara M."/>
            <person name="Takahashi M."/>
            <person name="Kanda K."/>
            <person name="Yokoi T."/>
            <person name="Furuya T."/>
            <person name="Kikkawa E."/>
            <person name="Omura Y."/>
            <person name="Abe K."/>
            <person name="Kamihara K."/>
            <person name="Katsuta N."/>
            <person name="Sato K."/>
            <person name="Tanikawa M."/>
            <person name="Yamazaki M."/>
            <person name="Ninomiya K."/>
            <person name="Ishibashi T."/>
            <person name="Yamashita H."/>
            <person name="Murakawa K."/>
            <person name="Fujimori K."/>
            <person name="Tanai H."/>
            <person name="Kimata M."/>
            <person name="Watanabe M."/>
            <person name="Hiraoka S."/>
            <person name="Chiba Y."/>
            <person name="Ishida S."/>
            <person name="Ono Y."/>
            <person name="Takiguchi S."/>
            <person name="Watanabe S."/>
            <person name="Yosida M."/>
            <person name="Hotuta T."/>
            <person name="Kusano J."/>
            <person name="Kanehori K."/>
            <person name="Takahashi-Fujii A."/>
            <person name="Hara H."/>
            <person name="Tanase T.-O."/>
            <person name="Nomura Y."/>
            <person name="Togiya S."/>
            <person name="Komai F."/>
            <person name="Hara R."/>
            <person name="Takeuchi K."/>
            <person name="Arita M."/>
            <person name="Imose N."/>
            <person name="Musashino K."/>
            <person name="Yuuki H."/>
            <person name="Oshima A."/>
            <person name="Sasaki N."/>
            <person name="Aotsuka S."/>
            <person name="Yoshikawa Y."/>
            <person name="Matsunawa H."/>
            <person name="Ichihara T."/>
            <person name="Shiohata N."/>
            <person name="Sano S."/>
            <person name="Moriya S."/>
            <person name="Momiyama H."/>
            <person name="Satoh N."/>
            <person name="Takami S."/>
            <person name="Terashima Y."/>
            <person name="Suzuki O."/>
            <person name="Nakagawa S."/>
            <person name="Senoh A."/>
            <person name="Mizoguchi H."/>
            <person name="Goto Y."/>
            <person name="Shimizu F."/>
            <person name="Wakebe H."/>
            <person name="Hishigaki H."/>
            <person name="Watanabe T."/>
            <person name="Sugiyama A."/>
            <person name="Takemoto M."/>
            <person name="Kawakami B."/>
            <person name="Yamazaki M."/>
            <person name="Watanabe K."/>
            <person name="Kumagai A."/>
            <person name="Itakura S."/>
            <person name="Fukuzumi Y."/>
            <person name="Fujimori Y."/>
            <person name="Komiyama M."/>
            <person name="Tashiro H."/>
            <person name="Tanigami A."/>
            <person name="Fujiwara T."/>
            <person name="Ono T."/>
            <person name="Yamada K."/>
            <person name="Fujii Y."/>
            <person name="Ozaki K."/>
            <person name="Hirao M."/>
            <person name="Ohmori Y."/>
            <person name="Kawabata A."/>
            <person name="Hikiji T."/>
            <person name="Kobatake N."/>
            <person name="Inagaki H."/>
            <person name="Ikema Y."/>
            <person name="Okamoto S."/>
            <person name="Okitani R."/>
            <person name="Kawakami T."/>
            <person name="Noguchi S."/>
            <person name="Itoh T."/>
            <person name="Shigeta K."/>
            <person name="Senba T."/>
            <person name="Matsumura K."/>
            <person name="Nakajima Y."/>
            <person name="Mizuno T."/>
            <person name="Morinaga M."/>
            <person name="Sasaki M."/>
            <person name="Togashi T."/>
            <person name="Oyama M."/>
            <person name="Hata H."/>
            <person name="Watanabe M."/>
            <person name="Komatsu T."/>
            <person name="Mizushima-Sugano J."/>
            <person name="Satoh T."/>
            <person name="Shirai Y."/>
            <person name="Takahashi Y."/>
            <person name="Nakagawa K."/>
            <person name="Okumura K."/>
            <person name="Nagase T."/>
            <person name="Nomura N."/>
            <person name="Kikuchi H."/>
            <person name="Masuho Y."/>
            <person name="Yamashita R."/>
            <person name="Nakai K."/>
            <person name="Yada T."/>
            <person name="Nakamura Y."/>
            <person name="Ohara O."/>
            <person name="Isogai T."/>
            <person name="Sugano S."/>
        </authorList>
    </citation>
    <scope>NUCLEOTIDE SEQUENCE [LARGE SCALE MRNA]</scope>
    <scope>VARIANT ASN-39</scope>
</reference>
<reference key="3">
    <citation type="journal article" date="2005" name="Nature">
        <title>The DNA sequence of the human X chromosome.</title>
        <authorList>
            <person name="Ross M.T."/>
            <person name="Grafham D.V."/>
            <person name="Coffey A.J."/>
            <person name="Scherer S."/>
            <person name="McLay K."/>
            <person name="Muzny D."/>
            <person name="Platzer M."/>
            <person name="Howell G.R."/>
            <person name="Burrows C."/>
            <person name="Bird C.P."/>
            <person name="Frankish A."/>
            <person name="Lovell F.L."/>
            <person name="Howe K.L."/>
            <person name="Ashurst J.L."/>
            <person name="Fulton R.S."/>
            <person name="Sudbrak R."/>
            <person name="Wen G."/>
            <person name="Jones M.C."/>
            <person name="Hurles M.E."/>
            <person name="Andrews T.D."/>
            <person name="Scott C.E."/>
            <person name="Searle S."/>
            <person name="Ramser J."/>
            <person name="Whittaker A."/>
            <person name="Deadman R."/>
            <person name="Carter N.P."/>
            <person name="Hunt S.E."/>
            <person name="Chen R."/>
            <person name="Cree A."/>
            <person name="Gunaratne P."/>
            <person name="Havlak P."/>
            <person name="Hodgson A."/>
            <person name="Metzker M.L."/>
            <person name="Richards S."/>
            <person name="Scott G."/>
            <person name="Steffen D."/>
            <person name="Sodergren E."/>
            <person name="Wheeler D.A."/>
            <person name="Worley K.C."/>
            <person name="Ainscough R."/>
            <person name="Ambrose K.D."/>
            <person name="Ansari-Lari M.A."/>
            <person name="Aradhya S."/>
            <person name="Ashwell R.I."/>
            <person name="Babbage A.K."/>
            <person name="Bagguley C.L."/>
            <person name="Ballabio A."/>
            <person name="Banerjee R."/>
            <person name="Barker G.E."/>
            <person name="Barlow K.F."/>
            <person name="Barrett I.P."/>
            <person name="Bates K.N."/>
            <person name="Beare D.M."/>
            <person name="Beasley H."/>
            <person name="Beasley O."/>
            <person name="Beck A."/>
            <person name="Bethel G."/>
            <person name="Blechschmidt K."/>
            <person name="Brady N."/>
            <person name="Bray-Allen S."/>
            <person name="Bridgeman A.M."/>
            <person name="Brown A.J."/>
            <person name="Brown M.J."/>
            <person name="Bonnin D."/>
            <person name="Bruford E.A."/>
            <person name="Buhay C."/>
            <person name="Burch P."/>
            <person name="Burford D."/>
            <person name="Burgess J."/>
            <person name="Burrill W."/>
            <person name="Burton J."/>
            <person name="Bye J.M."/>
            <person name="Carder C."/>
            <person name="Carrel L."/>
            <person name="Chako J."/>
            <person name="Chapman J.C."/>
            <person name="Chavez D."/>
            <person name="Chen E."/>
            <person name="Chen G."/>
            <person name="Chen Y."/>
            <person name="Chen Z."/>
            <person name="Chinault C."/>
            <person name="Ciccodicola A."/>
            <person name="Clark S.Y."/>
            <person name="Clarke G."/>
            <person name="Clee C.M."/>
            <person name="Clegg S."/>
            <person name="Clerc-Blankenburg K."/>
            <person name="Clifford K."/>
            <person name="Cobley V."/>
            <person name="Cole C.G."/>
            <person name="Conquer J.S."/>
            <person name="Corby N."/>
            <person name="Connor R.E."/>
            <person name="David R."/>
            <person name="Davies J."/>
            <person name="Davis C."/>
            <person name="Davis J."/>
            <person name="Delgado O."/>
            <person name="Deshazo D."/>
            <person name="Dhami P."/>
            <person name="Ding Y."/>
            <person name="Dinh H."/>
            <person name="Dodsworth S."/>
            <person name="Draper H."/>
            <person name="Dugan-Rocha S."/>
            <person name="Dunham A."/>
            <person name="Dunn M."/>
            <person name="Durbin K.J."/>
            <person name="Dutta I."/>
            <person name="Eades T."/>
            <person name="Ellwood M."/>
            <person name="Emery-Cohen A."/>
            <person name="Errington H."/>
            <person name="Evans K.L."/>
            <person name="Faulkner L."/>
            <person name="Francis F."/>
            <person name="Frankland J."/>
            <person name="Fraser A.E."/>
            <person name="Galgoczy P."/>
            <person name="Gilbert J."/>
            <person name="Gill R."/>
            <person name="Gloeckner G."/>
            <person name="Gregory S.G."/>
            <person name="Gribble S."/>
            <person name="Griffiths C."/>
            <person name="Grocock R."/>
            <person name="Gu Y."/>
            <person name="Gwilliam R."/>
            <person name="Hamilton C."/>
            <person name="Hart E.A."/>
            <person name="Hawes A."/>
            <person name="Heath P.D."/>
            <person name="Heitmann K."/>
            <person name="Hennig S."/>
            <person name="Hernandez J."/>
            <person name="Hinzmann B."/>
            <person name="Ho S."/>
            <person name="Hoffs M."/>
            <person name="Howden P.J."/>
            <person name="Huckle E.J."/>
            <person name="Hume J."/>
            <person name="Hunt P.J."/>
            <person name="Hunt A.R."/>
            <person name="Isherwood J."/>
            <person name="Jacob L."/>
            <person name="Johnson D."/>
            <person name="Jones S."/>
            <person name="de Jong P.J."/>
            <person name="Joseph S.S."/>
            <person name="Keenan S."/>
            <person name="Kelly S."/>
            <person name="Kershaw J.K."/>
            <person name="Khan Z."/>
            <person name="Kioschis P."/>
            <person name="Klages S."/>
            <person name="Knights A.J."/>
            <person name="Kosiura A."/>
            <person name="Kovar-Smith C."/>
            <person name="Laird G.K."/>
            <person name="Langford C."/>
            <person name="Lawlor S."/>
            <person name="Leversha M."/>
            <person name="Lewis L."/>
            <person name="Liu W."/>
            <person name="Lloyd C."/>
            <person name="Lloyd D.M."/>
            <person name="Loulseged H."/>
            <person name="Loveland J.E."/>
            <person name="Lovell J.D."/>
            <person name="Lozado R."/>
            <person name="Lu J."/>
            <person name="Lyne R."/>
            <person name="Ma J."/>
            <person name="Maheshwari M."/>
            <person name="Matthews L.H."/>
            <person name="McDowall J."/>
            <person name="McLaren S."/>
            <person name="McMurray A."/>
            <person name="Meidl P."/>
            <person name="Meitinger T."/>
            <person name="Milne S."/>
            <person name="Miner G."/>
            <person name="Mistry S.L."/>
            <person name="Morgan M."/>
            <person name="Morris S."/>
            <person name="Mueller I."/>
            <person name="Mullikin J.C."/>
            <person name="Nguyen N."/>
            <person name="Nordsiek G."/>
            <person name="Nyakatura G."/>
            <person name="O'dell C.N."/>
            <person name="Okwuonu G."/>
            <person name="Palmer S."/>
            <person name="Pandian R."/>
            <person name="Parker D."/>
            <person name="Parrish J."/>
            <person name="Pasternak S."/>
            <person name="Patel D."/>
            <person name="Pearce A.V."/>
            <person name="Pearson D.M."/>
            <person name="Pelan S.E."/>
            <person name="Perez L."/>
            <person name="Porter K.M."/>
            <person name="Ramsey Y."/>
            <person name="Reichwald K."/>
            <person name="Rhodes S."/>
            <person name="Ridler K.A."/>
            <person name="Schlessinger D."/>
            <person name="Schueler M.G."/>
            <person name="Sehra H.K."/>
            <person name="Shaw-Smith C."/>
            <person name="Shen H."/>
            <person name="Sheridan E.M."/>
            <person name="Shownkeen R."/>
            <person name="Skuce C.D."/>
            <person name="Smith M.L."/>
            <person name="Sotheran E.C."/>
            <person name="Steingruber H.E."/>
            <person name="Steward C.A."/>
            <person name="Storey R."/>
            <person name="Swann R.M."/>
            <person name="Swarbreck D."/>
            <person name="Tabor P.E."/>
            <person name="Taudien S."/>
            <person name="Taylor T."/>
            <person name="Teague B."/>
            <person name="Thomas K."/>
            <person name="Thorpe A."/>
            <person name="Timms K."/>
            <person name="Tracey A."/>
            <person name="Trevanion S."/>
            <person name="Tromans A.C."/>
            <person name="d'Urso M."/>
            <person name="Verduzco D."/>
            <person name="Villasana D."/>
            <person name="Waldron L."/>
            <person name="Wall M."/>
            <person name="Wang Q."/>
            <person name="Warren J."/>
            <person name="Warry G.L."/>
            <person name="Wei X."/>
            <person name="West A."/>
            <person name="Whitehead S.L."/>
            <person name="Whiteley M.N."/>
            <person name="Wilkinson J.E."/>
            <person name="Willey D.L."/>
            <person name="Williams G."/>
            <person name="Williams L."/>
            <person name="Williamson A."/>
            <person name="Williamson H."/>
            <person name="Wilming L."/>
            <person name="Woodmansey R.L."/>
            <person name="Wray P.W."/>
            <person name="Yen J."/>
            <person name="Zhang J."/>
            <person name="Zhou J."/>
            <person name="Zoghbi H."/>
            <person name="Zorilla S."/>
            <person name="Buck D."/>
            <person name="Reinhardt R."/>
            <person name="Poustka A."/>
            <person name="Rosenthal A."/>
            <person name="Lehrach H."/>
            <person name="Meindl A."/>
            <person name="Minx P.J."/>
            <person name="Hillier L.W."/>
            <person name="Willard H.F."/>
            <person name="Wilson R.K."/>
            <person name="Waterston R.H."/>
            <person name="Rice C.M."/>
            <person name="Vaudin M."/>
            <person name="Coulson A."/>
            <person name="Nelson D.L."/>
            <person name="Weinstock G."/>
            <person name="Sulston J.E."/>
            <person name="Durbin R.M."/>
            <person name="Hubbard T."/>
            <person name="Gibbs R.A."/>
            <person name="Beck S."/>
            <person name="Rogers J."/>
            <person name="Bentley D.R."/>
        </authorList>
    </citation>
    <scope>NUCLEOTIDE SEQUENCE [LARGE SCALE GENOMIC DNA]</scope>
</reference>
<reference key="4">
    <citation type="journal article" date="2004" name="Genome Res.">
        <title>The status, quality, and expansion of the NIH full-length cDNA project: the Mammalian Gene Collection (MGC).</title>
        <authorList>
            <consortium name="The MGC Project Team"/>
        </authorList>
    </citation>
    <scope>NUCLEOTIDE SEQUENCE [LARGE SCALE MRNA]</scope>
    <source>
        <tissue>Uterus</tissue>
    </source>
</reference>
<reference key="5">
    <citation type="journal article" date="2002" name="BMC Biochem.">
        <title>Cloning and characterisation of hAps1 and hAps2, human diadenosine polyphosphate-metabolising Nudix hydrolases.</title>
        <authorList>
            <person name="Leslie N.R."/>
            <person name="McLennan A.G."/>
            <person name="Safrany S.T."/>
        </authorList>
    </citation>
    <scope>CATALYTIC ACTIVITY</scope>
    <scope>SUBCELLULAR LOCATION</scope>
    <scope>COFACTOR</scope>
    <scope>BIOPHYSICOCHEMICAL PROPERTIES</scope>
    <scope>TISSUE SPECIFICITY</scope>
    <scope>VARIANT ASN-39</scope>
</reference>
<reference key="6">
    <citation type="journal article" date="2002" name="J. Biol. Chem.">
        <title>Nudix hydrolases that degrade dinucleoside and diphosphoinositol polyphosphates also have 5-phosphoribosyl 1-pyrophosphate (PRPP) pyrophosphatase activity that generates the glycolytic activator ribose 1,5-bisphosphate.</title>
        <authorList>
            <person name="Fisher D.I."/>
            <person name="Safrany S.T."/>
            <person name="Strike P."/>
            <person name="McLennan A.G."/>
            <person name="Cartwright J.L."/>
        </authorList>
    </citation>
    <scope>CATALYTIC ACTIVITY</scope>
</reference>
<reference key="7">
    <citation type="journal article" date="2011" name="BMC Syst. Biol.">
        <title>Initial characterization of the human central proteome.</title>
        <authorList>
            <person name="Burkard T.R."/>
            <person name="Planyavsky M."/>
            <person name="Kaupe I."/>
            <person name="Breitwieser F.P."/>
            <person name="Buerckstuemmer T."/>
            <person name="Bennett K.L."/>
            <person name="Superti-Furga G."/>
            <person name="Colinge J."/>
        </authorList>
    </citation>
    <scope>IDENTIFICATION BY MASS SPECTROMETRY [LARGE SCALE ANALYSIS]</scope>
</reference>
<feature type="chain" id="PRO_0000057065" description="Diphosphoinositol polyphosphate phosphohydrolase 3-beta">
    <location>
        <begin position="1"/>
        <end position="164"/>
    </location>
</feature>
<feature type="domain" description="Nudix hydrolase" evidence="3">
    <location>
        <begin position="17"/>
        <end position="144"/>
    </location>
</feature>
<feature type="region of interest" description="Disordered" evidence="4">
    <location>
        <begin position="144"/>
        <end position="164"/>
    </location>
</feature>
<feature type="short sequence motif" description="Nudix box">
    <location>
        <begin position="50"/>
        <end position="71"/>
    </location>
</feature>
<feature type="compositionally biased region" description="Polar residues" evidence="4">
    <location>
        <begin position="148"/>
        <end position="164"/>
    </location>
</feature>
<feature type="active site" description="Proton acceptor" evidence="1">
    <location>
        <position position="68"/>
    </location>
</feature>
<feature type="binding site" evidence="2">
    <location>
        <position position="9"/>
    </location>
    <ligand>
        <name>substrate</name>
    </ligand>
</feature>
<feature type="binding site" evidence="2">
    <location>
        <begin position="17"/>
        <end position="19"/>
    </location>
    <ligand>
        <name>substrate</name>
    </ligand>
</feature>
<feature type="binding site" evidence="2">
    <location>
        <begin position="38"/>
        <end position="40"/>
    </location>
    <ligand>
        <name>substrate</name>
    </ligand>
</feature>
<feature type="binding site" evidence="2">
    <location>
        <position position="49"/>
    </location>
    <ligand>
        <name>Mg(2+)</name>
        <dbReference type="ChEBI" id="CHEBI:18420"/>
        <label>1</label>
    </ligand>
</feature>
<feature type="binding site" evidence="2">
    <location>
        <position position="65"/>
    </location>
    <ligand>
        <name>Mg(2+)</name>
        <dbReference type="ChEBI" id="CHEBI:18420"/>
        <label>2</label>
    </ligand>
</feature>
<feature type="binding site" evidence="2">
    <location>
        <position position="65"/>
    </location>
    <ligand>
        <name>Mg(2+)</name>
        <dbReference type="ChEBI" id="CHEBI:18420"/>
        <label>3</label>
    </ligand>
</feature>
<feature type="binding site" evidence="2">
    <location>
        <position position="69"/>
    </location>
    <ligand>
        <name>Mg(2+)</name>
        <dbReference type="ChEBI" id="CHEBI:18420"/>
        <label>1</label>
    </ligand>
</feature>
<feature type="binding site" evidence="2">
    <location>
        <begin position="89"/>
        <end position="91"/>
    </location>
    <ligand>
        <name>substrate</name>
    </ligand>
</feature>
<feature type="binding site" evidence="2">
    <location>
        <position position="115"/>
    </location>
    <ligand>
        <name>substrate</name>
    </ligand>
</feature>
<feature type="binding site" evidence="2">
    <location>
        <position position="133"/>
    </location>
    <ligand>
        <name>substrate</name>
    </ligand>
</feature>
<feature type="sequence variant" id="VAR_022738" evidence="6 8">
    <original>S</original>
    <variation>N</variation>
    <location>
        <position position="39"/>
    </location>
</feature>